<comment type="function">
    <text evidence="1">Involved in the gluconeogenesis. Catalyzes the conversion of oxaloacetate (OAA) to phosphoenolpyruvate (PEP) through direct phosphoryl transfer between the nucleoside triphosphate and OAA.</text>
</comment>
<comment type="catalytic activity">
    <reaction evidence="1">
        <text>oxaloacetate + ATP = phosphoenolpyruvate + ADP + CO2</text>
        <dbReference type="Rhea" id="RHEA:18617"/>
        <dbReference type="ChEBI" id="CHEBI:16452"/>
        <dbReference type="ChEBI" id="CHEBI:16526"/>
        <dbReference type="ChEBI" id="CHEBI:30616"/>
        <dbReference type="ChEBI" id="CHEBI:58702"/>
        <dbReference type="ChEBI" id="CHEBI:456216"/>
        <dbReference type="EC" id="4.1.1.49"/>
    </reaction>
</comment>
<comment type="cofactor">
    <cofactor evidence="1">
        <name>Mn(2+)</name>
        <dbReference type="ChEBI" id="CHEBI:29035"/>
    </cofactor>
    <text evidence="1">Binds 1 Mn(2+) ion per subunit.</text>
</comment>
<comment type="pathway">
    <text evidence="1">Carbohydrate biosynthesis; gluconeogenesis.</text>
</comment>
<comment type="subunit">
    <text evidence="1">Monomer.</text>
</comment>
<comment type="subcellular location">
    <subcellularLocation>
        <location evidence="1">Cytoplasm</location>
    </subcellularLocation>
</comment>
<comment type="similarity">
    <text evidence="1">Belongs to the phosphoenolpyruvate carboxykinase (ATP) family.</text>
</comment>
<proteinExistence type="inferred from homology"/>
<accession>B2K5U8</accession>
<protein>
    <recommendedName>
        <fullName evidence="1">Phosphoenolpyruvate carboxykinase (ATP)</fullName>
        <shortName evidence="1">PCK</shortName>
        <shortName evidence="1">PEP carboxykinase</shortName>
        <shortName evidence="1">PEPCK</shortName>
        <ecNumber evidence="1">4.1.1.49</ecNumber>
    </recommendedName>
</protein>
<sequence length="539" mass="59321">MSVKGITPQELAAYGIHNVSEIVYNPSYDLLFEEETKPTLEGYERGTLTTTGAIAVDTGIFTGRSPKDKYIVRDAITQDTVWWADQGKGKNDNKPLSQEIWSHLKGLVTEQLSGKRLFVVDTFCGANADTRLQVRFITEVAWQAHFVKNMFIRPSDEELARFEPDFIVMNGAKCTNPQWKEQGLNSENFVAFNLTERMQLIGGTWYGGEMKKGMFSMMNYLLPLKGIASMHCSANVGEKGDVAIFFGLSGTGKTTLSTDPKRKLIGDDEHGWDDDGVFNFEGGCYAKTIKLSEEAEPDIYHAIKRDALLENVVVLADGTVDFNDGSKTENTRVSYPIYHIDNIVKPVSKAGHATKVIFLTADAFGVLPPVSRLTANQTQYHFLSGFTAKLAGTERGVTEPTPTFSACFGAAFLSLHPTQYAEVLVKRMQAVGAQAYLVNTGWNGTGKRISIKDTRAIIDAILNGEIDKAETFTLPIFDLAVPMALPGVNPDILDPRDTYADKAQWQEKAEDLAKRFATNFDKYTDTPAGAALVSAGPKI</sequence>
<evidence type="ECO:0000255" key="1">
    <source>
        <dbReference type="HAMAP-Rule" id="MF_00453"/>
    </source>
</evidence>
<keyword id="KW-0067">ATP-binding</keyword>
<keyword id="KW-0963">Cytoplasm</keyword>
<keyword id="KW-0210">Decarboxylase</keyword>
<keyword id="KW-0312">Gluconeogenesis</keyword>
<keyword id="KW-0456">Lyase</keyword>
<keyword id="KW-0464">Manganese</keyword>
<keyword id="KW-0479">Metal-binding</keyword>
<keyword id="KW-0547">Nucleotide-binding</keyword>
<feature type="chain" id="PRO_1000192341" description="Phosphoenolpyruvate carboxykinase (ATP)">
    <location>
        <begin position="1"/>
        <end position="539"/>
    </location>
</feature>
<feature type="binding site" evidence="1">
    <location>
        <position position="64"/>
    </location>
    <ligand>
        <name>substrate</name>
    </ligand>
</feature>
<feature type="binding site" evidence="1">
    <location>
        <position position="206"/>
    </location>
    <ligand>
        <name>substrate</name>
    </ligand>
</feature>
<feature type="binding site" evidence="1">
    <location>
        <position position="212"/>
    </location>
    <ligand>
        <name>ATP</name>
        <dbReference type="ChEBI" id="CHEBI:30616"/>
    </ligand>
</feature>
<feature type="binding site" evidence="1">
    <location>
        <position position="212"/>
    </location>
    <ligand>
        <name>Mn(2+)</name>
        <dbReference type="ChEBI" id="CHEBI:29035"/>
    </ligand>
</feature>
<feature type="binding site" evidence="1">
    <location>
        <position position="212"/>
    </location>
    <ligand>
        <name>substrate</name>
    </ligand>
</feature>
<feature type="binding site" evidence="1">
    <location>
        <position position="231"/>
    </location>
    <ligand>
        <name>ATP</name>
        <dbReference type="ChEBI" id="CHEBI:30616"/>
    </ligand>
</feature>
<feature type="binding site" evidence="1">
    <location>
        <position position="231"/>
    </location>
    <ligand>
        <name>Mn(2+)</name>
        <dbReference type="ChEBI" id="CHEBI:29035"/>
    </ligand>
</feature>
<feature type="binding site" evidence="1">
    <location>
        <begin position="247"/>
        <end position="255"/>
    </location>
    <ligand>
        <name>ATP</name>
        <dbReference type="ChEBI" id="CHEBI:30616"/>
    </ligand>
</feature>
<feature type="binding site" evidence="1">
    <location>
        <position position="268"/>
    </location>
    <ligand>
        <name>Mn(2+)</name>
        <dbReference type="ChEBI" id="CHEBI:29035"/>
    </ligand>
</feature>
<feature type="binding site" evidence="1">
    <location>
        <position position="296"/>
    </location>
    <ligand>
        <name>ATP</name>
        <dbReference type="ChEBI" id="CHEBI:30616"/>
    </ligand>
</feature>
<feature type="binding site" evidence="1">
    <location>
        <position position="332"/>
    </location>
    <ligand>
        <name>ATP</name>
        <dbReference type="ChEBI" id="CHEBI:30616"/>
    </ligand>
</feature>
<feature type="binding site" evidence="1">
    <location>
        <position position="332"/>
    </location>
    <ligand>
        <name>substrate</name>
    </ligand>
</feature>
<feature type="binding site" evidence="1">
    <location>
        <begin position="448"/>
        <end position="449"/>
    </location>
    <ligand>
        <name>ATP</name>
        <dbReference type="ChEBI" id="CHEBI:30616"/>
    </ligand>
</feature>
<feature type="binding site" evidence="1">
    <location>
        <position position="454"/>
    </location>
    <ligand>
        <name>ATP</name>
        <dbReference type="ChEBI" id="CHEBI:30616"/>
    </ligand>
</feature>
<name>PCKA_YERPB</name>
<organism>
    <name type="scientific">Yersinia pseudotuberculosis serotype IB (strain PB1/+)</name>
    <dbReference type="NCBI Taxonomy" id="502801"/>
    <lineage>
        <taxon>Bacteria</taxon>
        <taxon>Pseudomonadati</taxon>
        <taxon>Pseudomonadota</taxon>
        <taxon>Gammaproteobacteria</taxon>
        <taxon>Enterobacterales</taxon>
        <taxon>Yersiniaceae</taxon>
        <taxon>Yersinia</taxon>
    </lineage>
</organism>
<gene>
    <name evidence="1" type="primary">pckA</name>
    <name type="ordered locus">YPTS_3958</name>
</gene>
<dbReference type="EC" id="4.1.1.49" evidence="1"/>
<dbReference type="EMBL" id="CP001048">
    <property type="protein sequence ID" value="ACC90907.1"/>
    <property type="molecule type" value="Genomic_DNA"/>
</dbReference>
<dbReference type="RefSeq" id="WP_011193240.1">
    <property type="nucleotide sequence ID" value="NZ_CP009780.1"/>
</dbReference>
<dbReference type="SMR" id="B2K5U8"/>
<dbReference type="GeneID" id="49784243"/>
<dbReference type="KEGG" id="ypb:YPTS_3958"/>
<dbReference type="PATRIC" id="fig|502801.10.peg.3423"/>
<dbReference type="UniPathway" id="UPA00138"/>
<dbReference type="GO" id="GO:0005829">
    <property type="term" value="C:cytosol"/>
    <property type="evidence" value="ECO:0007669"/>
    <property type="project" value="TreeGrafter"/>
</dbReference>
<dbReference type="GO" id="GO:0005524">
    <property type="term" value="F:ATP binding"/>
    <property type="evidence" value="ECO:0007669"/>
    <property type="project" value="UniProtKB-UniRule"/>
</dbReference>
<dbReference type="GO" id="GO:0046872">
    <property type="term" value="F:metal ion binding"/>
    <property type="evidence" value="ECO:0007669"/>
    <property type="project" value="UniProtKB-KW"/>
</dbReference>
<dbReference type="GO" id="GO:0004612">
    <property type="term" value="F:phosphoenolpyruvate carboxykinase (ATP) activity"/>
    <property type="evidence" value="ECO:0007669"/>
    <property type="project" value="UniProtKB-UniRule"/>
</dbReference>
<dbReference type="GO" id="GO:0006094">
    <property type="term" value="P:gluconeogenesis"/>
    <property type="evidence" value="ECO:0007669"/>
    <property type="project" value="UniProtKB-UniRule"/>
</dbReference>
<dbReference type="CDD" id="cd00484">
    <property type="entry name" value="PEPCK_ATP"/>
    <property type="match status" value="1"/>
</dbReference>
<dbReference type="FunFam" id="2.170.8.10:FF:000001">
    <property type="entry name" value="Phosphoenolpyruvate carboxykinase (ATP)"/>
    <property type="match status" value="1"/>
</dbReference>
<dbReference type="FunFam" id="3.40.449.10:FF:000001">
    <property type="entry name" value="Phosphoenolpyruvate carboxykinase (ATP)"/>
    <property type="match status" value="1"/>
</dbReference>
<dbReference type="Gene3D" id="3.90.228.20">
    <property type="match status" value="1"/>
</dbReference>
<dbReference type="Gene3D" id="3.40.449.10">
    <property type="entry name" value="Phosphoenolpyruvate Carboxykinase, domain 1"/>
    <property type="match status" value="1"/>
</dbReference>
<dbReference type="Gene3D" id="2.170.8.10">
    <property type="entry name" value="Phosphoenolpyruvate Carboxykinase, domain 2"/>
    <property type="match status" value="1"/>
</dbReference>
<dbReference type="HAMAP" id="MF_00453">
    <property type="entry name" value="PEPCK_ATP"/>
    <property type="match status" value="1"/>
</dbReference>
<dbReference type="InterPro" id="IPR001272">
    <property type="entry name" value="PEP_carboxykinase_ATP"/>
</dbReference>
<dbReference type="InterPro" id="IPR013035">
    <property type="entry name" value="PEP_carboxykinase_C"/>
</dbReference>
<dbReference type="InterPro" id="IPR008210">
    <property type="entry name" value="PEP_carboxykinase_N"/>
</dbReference>
<dbReference type="InterPro" id="IPR015994">
    <property type="entry name" value="PEPCK_ATP_CS"/>
</dbReference>
<dbReference type="NCBIfam" id="TIGR00224">
    <property type="entry name" value="pckA"/>
    <property type="match status" value="1"/>
</dbReference>
<dbReference type="NCBIfam" id="NF006819">
    <property type="entry name" value="PRK09344.1-1"/>
    <property type="match status" value="1"/>
</dbReference>
<dbReference type="NCBIfam" id="NF006820">
    <property type="entry name" value="PRK09344.1-2"/>
    <property type="match status" value="1"/>
</dbReference>
<dbReference type="NCBIfam" id="NF006821">
    <property type="entry name" value="PRK09344.1-3"/>
    <property type="match status" value="1"/>
</dbReference>
<dbReference type="PANTHER" id="PTHR30031:SF0">
    <property type="entry name" value="PHOSPHOENOLPYRUVATE CARBOXYKINASE (ATP)"/>
    <property type="match status" value="1"/>
</dbReference>
<dbReference type="PANTHER" id="PTHR30031">
    <property type="entry name" value="PHOSPHOENOLPYRUVATE CARBOXYKINASE ATP"/>
    <property type="match status" value="1"/>
</dbReference>
<dbReference type="Pfam" id="PF01293">
    <property type="entry name" value="PEPCK_ATP"/>
    <property type="match status" value="1"/>
</dbReference>
<dbReference type="PIRSF" id="PIRSF006294">
    <property type="entry name" value="PEP_crbxkin"/>
    <property type="match status" value="1"/>
</dbReference>
<dbReference type="SUPFAM" id="SSF68923">
    <property type="entry name" value="PEP carboxykinase N-terminal domain"/>
    <property type="match status" value="1"/>
</dbReference>
<dbReference type="SUPFAM" id="SSF53795">
    <property type="entry name" value="PEP carboxykinase-like"/>
    <property type="match status" value="1"/>
</dbReference>
<dbReference type="PROSITE" id="PS00532">
    <property type="entry name" value="PEPCK_ATP"/>
    <property type="match status" value="1"/>
</dbReference>
<reference key="1">
    <citation type="submission" date="2008-04" db="EMBL/GenBank/DDBJ databases">
        <title>Complete sequence of Yersinia pseudotuberculosis PB1/+.</title>
        <authorList>
            <person name="Copeland A."/>
            <person name="Lucas S."/>
            <person name="Lapidus A."/>
            <person name="Glavina del Rio T."/>
            <person name="Dalin E."/>
            <person name="Tice H."/>
            <person name="Bruce D."/>
            <person name="Goodwin L."/>
            <person name="Pitluck S."/>
            <person name="Munk A.C."/>
            <person name="Brettin T."/>
            <person name="Detter J.C."/>
            <person name="Han C."/>
            <person name="Tapia R."/>
            <person name="Schmutz J."/>
            <person name="Larimer F."/>
            <person name="Land M."/>
            <person name="Hauser L."/>
            <person name="Challacombe J.F."/>
            <person name="Green L."/>
            <person name="Lindler L.E."/>
            <person name="Nikolich M.P."/>
            <person name="Richardson P."/>
        </authorList>
    </citation>
    <scope>NUCLEOTIDE SEQUENCE [LARGE SCALE GENOMIC DNA]</scope>
    <source>
        <strain>PB1/+</strain>
    </source>
</reference>